<accession>Q8GZ26</accession>
<accession>Q9LR77</accession>
<evidence type="ECO:0000255" key="1">
    <source>
        <dbReference type="PROSITE-ProRule" id="PRU00176"/>
    </source>
</evidence>
<evidence type="ECO:0000256" key="2">
    <source>
        <dbReference type="SAM" id="MobiDB-lite"/>
    </source>
</evidence>
<evidence type="ECO:0000269" key="3">
    <source>
    </source>
</evidence>
<evidence type="ECO:0000303" key="4">
    <source>
    </source>
</evidence>
<evidence type="ECO:0000305" key="5"/>
<evidence type="ECO:0000312" key="6">
    <source>
        <dbReference type="Araport" id="AT1G03457"/>
    </source>
</evidence>
<evidence type="ECO:0000312" key="7">
    <source>
        <dbReference type="EMBL" id="AAF86538.1"/>
    </source>
</evidence>
<gene>
    <name evidence="4" type="primary">BRN2</name>
    <name evidence="6" type="ordered locus">At1g03457</name>
    <name evidence="7" type="ORF">F21B7.8</name>
</gene>
<dbReference type="EMBL" id="AC002560">
    <property type="protein sequence ID" value="AAF86538.1"/>
    <property type="status" value="ALT_SEQ"/>
    <property type="molecule type" value="Genomic_DNA"/>
</dbReference>
<dbReference type="EMBL" id="CP002684">
    <property type="protein sequence ID" value="AEE27573.1"/>
    <property type="molecule type" value="Genomic_DNA"/>
</dbReference>
<dbReference type="EMBL" id="AK117246">
    <property type="protein sequence ID" value="BAC41921.1"/>
    <property type="molecule type" value="mRNA"/>
</dbReference>
<dbReference type="EMBL" id="BT005358">
    <property type="protein sequence ID" value="AAO63422.1"/>
    <property type="molecule type" value="mRNA"/>
</dbReference>
<dbReference type="PIR" id="B86166">
    <property type="entry name" value="B86166"/>
</dbReference>
<dbReference type="PIR" id="T00912">
    <property type="entry name" value="T00912"/>
</dbReference>
<dbReference type="RefSeq" id="NP_171845.2">
    <molecule id="Q8GZ26-1"/>
    <property type="nucleotide sequence ID" value="NM_100228.9"/>
</dbReference>
<dbReference type="SMR" id="Q8GZ26"/>
<dbReference type="FunCoup" id="Q8GZ26">
    <property type="interactions" value="787"/>
</dbReference>
<dbReference type="IntAct" id="Q8GZ26">
    <property type="interactions" value="3"/>
</dbReference>
<dbReference type="STRING" id="3702.Q8GZ26"/>
<dbReference type="iPTMnet" id="Q8GZ26"/>
<dbReference type="PaxDb" id="3702-AT1G03457.2"/>
<dbReference type="EnsemblPlants" id="AT1G03457.1">
    <molecule id="Q8GZ26-1"/>
    <property type="protein sequence ID" value="AT1G03457.1"/>
    <property type="gene ID" value="AT1G03457"/>
</dbReference>
<dbReference type="GeneID" id="839497"/>
<dbReference type="Gramene" id="AT1G03457.1">
    <molecule id="Q8GZ26-1"/>
    <property type="protein sequence ID" value="AT1G03457.1"/>
    <property type="gene ID" value="AT1G03457"/>
</dbReference>
<dbReference type="KEGG" id="ath:AT1G03457"/>
<dbReference type="Araport" id="AT1G03457"/>
<dbReference type="TAIR" id="AT1G03457">
    <property type="gene designation" value="BRN2"/>
</dbReference>
<dbReference type="eggNOG" id="KOG0144">
    <property type="taxonomic scope" value="Eukaryota"/>
</dbReference>
<dbReference type="HOGENOM" id="CLU_015367_5_1_1"/>
<dbReference type="InParanoid" id="Q8GZ26"/>
<dbReference type="OMA" id="FTGMHKX"/>
<dbReference type="PhylomeDB" id="Q8GZ26"/>
<dbReference type="PRO" id="PR:Q8GZ26"/>
<dbReference type="Proteomes" id="UP000006548">
    <property type="component" value="Chromosome 1"/>
</dbReference>
<dbReference type="ExpressionAtlas" id="Q8GZ26">
    <property type="expression patterns" value="baseline and differential"/>
</dbReference>
<dbReference type="GO" id="GO:0005737">
    <property type="term" value="C:cytoplasm"/>
    <property type="evidence" value="ECO:0000314"/>
    <property type="project" value="UniProtKB"/>
</dbReference>
<dbReference type="GO" id="GO:1990904">
    <property type="term" value="C:ribonucleoprotein complex"/>
    <property type="evidence" value="ECO:0007669"/>
    <property type="project" value="UniProtKB-KW"/>
</dbReference>
<dbReference type="GO" id="GO:0003729">
    <property type="term" value="F:mRNA binding"/>
    <property type="evidence" value="ECO:0000314"/>
    <property type="project" value="UniProtKB"/>
</dbReference>
<dbReference type="GO" id="GO:0009908">
    <property type="term" value="P:flower development"/>
    <property type="evidence" value="ECO:0007669"/>
    <property type="project" value="UniProtKB-KW"/>
</dbReference>
<dbReference type="GO" id="GO:0006402">
    <property type="term" value="P:mRNA catabolic process"/>
    <property type="evidence" value="ECO:0000314"/>
    <property type="project" value="UniProtKB"/>
</dbReference>
<dbReference type="GO" id="GO:0048573">
    <property type="term" value="P:photoperiodism, flowering"/>
    <property type="evidence" value="ECO:0000315"/>
    <property type="project" value="CACAO"/>
</dbReference>
<dbReference type="GO" id="GO:2000028">
    <property type="term" value="P:regulation of photoperiodism, flowering"/>
    <property type="evidence" value="ECO:0000315"/>
    <property type="project" value="UniProtKB"/>
</dbReference>
<dbReference type="CDD" id="cd12361">
    <property type="entry name" value="RRM1_2_CELF1-6_like"/>
    <property type="match status" value="1"/>
</dbReference>
<dbReference type="CDD" id="cd12362">
    <property type="entry name" value="RRM3_CELF1-6"/>
    <property type="match status" value="1"/>
</dbReference>
<dbReference type="FunFam" id="3.30.70.330:FF:000302">
    <property type="entry name" value="RNA-binding protein BRN1"/>
    <property type="match status" value="1"/>
</dbReference>
<dbReference type="FunFam" id="3.30.70.330:FF:000216">
    <property type="entry name" value="RNA-binding protein BRN1 isoform X1"/>
    <property type="match status" value="1"/>
</dbReference>
<dbReference type="FunFam" id="3.30.70.330:FF:001140">
    <property type="entry name" value="RNA-binding protein BRN2"/>
    <property type="match status" value="1"/>
</dbReference>
<dbReference type="Gene3D" id="3.30.70.330">
    <property type="match status" value="3"/>
</dbReference>
<dbReference type="InterPro" id="IPR002343">
    <property type="entry name" value="Hud_Sxl_RNA"/>
</dbReference>
<dbReference type="InterPro" id="IPR012677">
    <property type="entry name" value="Nucleotide-bd_a/b_plait_sf"/>
</dbReference>
<dbReference type="InterPro" id="IPR035979">
    <property type="entry name" value="RBD_domain_sf"/>
</dbReference>
<dbReference type="InterPro" id="IPR000504">
    <property type="entry name" value="RRM_dom"/>
</dbReference>
<dbReference type="PANTHER" id="PTHR24012">
    <property type="entry name" value="RNA BINDING PROTEIN"/>
    <property type="match status" value="1"/>
</dbReference>
<dbReference type="Pfam" id="PF00076">
    <property type="entry name" value="RRM_1"/>
    <property type="match status" value="3"/>
</dbReference>
<dbReference type="PRINTS" id="PR00961">
    <property type="entry name" value="HUDSXLRNA"/>
</dbReference>
<dbReference type="SMART" id="SM00360">
    <property type="entry name" value="RRM"/>
    <property type="match status" value="3"/>
</dbReference>
<dbReference type="SUPFAM" id="SSF54928">
    <property type="entry name" value="RNA-binding domain, RBD"/>
    <property type="match status" value="2"/>
</dbReference>
<dbReference type="PROSITE" id="PS50102">
    <property type="entry name" value="RRM"/>
    <property type="match status" value="3"/>
</dbReference>
<keyword id="KW-0025">Alternative splicing</keyword>
<keyword id="KW-0963">Cytoplasm</keyword>
<keyword id="KW-0287">Flowering</keyword>
<keyword id="KW-1185">Reference proteome</keyword>
<keyword id="KW-0677">Repeat</keyword>
<keyword id="KW-0687">Ribonucleoprotein</keyword>
<keyword id="KW-0694">RNA-binding</keyword>
<protein>
    <recommendedName>
        <fullName evidence="5">RNA-binding protein BRN2</fullName>
    </recommendedName>
    <alternativeName>
        <fullName evidence="4">Protein BRUNO-LIKE 2</fullName>
        <shortName evidence="4">AtBRN2</shortName>
    </alternativeName>
</protein>
<reference key="1">
    <citation type="journal article" date="2000" name="Nature">
        <title>Sequence and analysis of chromosome 1 of the plant Arabidopsis thaliana.</title>
        <authorList>
            <person name="Theologis A."/>
            <person name="Ecker J.R."/>
            <person name="Palm C.J."/>
            <person name="Federspiel N.A."/>
            <person name="Kaul S."/>
            <person name="White O."/>
            <person name="Alonso J."/>
            <person name="Altafi H."/>
            <person name="Araujo R."/>
            <person name="Bowman C.L."/>
            <person name="Brooks S.Y."/>
            <person name="Buehler E."/>
            <person name="Chan A."/>
            <person name="Chao Q."/>
            <person name="Chen H."/>
            <person name="Cheuk R.F."/>
            <person name="Chin C.W."/>
            <person name="Chung M.K."/>
            <person name="Conn L."/>
            <person name="Conway A.B."/>
            <person name="Conway A.R."/>
            <person name="Creasy T.H."/>
            <person name="Dewar K."/>
            <person name="Dunn P."/>
            <person name="Etgu P."/>
            <person name="Feldblyum T.V."/>
            <person name="Feng J.-D."/>
            <person name="Fong B."/>
            <person name="Fujii C.Y."/>
            <person name="Gill J.E."/>
            <person name="Goldsmith A.D."/>
            <person name="Haas B."/>
            <person name="Hansen N.F."/>
            <person name="Hughes B."/>
            <person name="Huizar L."/>
            <person name="Hunter J.L."/>
            <person name="Jenkins J."/>
            <person name="Johnson-Hopson C."/>
            <person name="Khan S."/>
            <person name="Khaykin E."/>
            <person name="Kim C.J."/>
            <person name="Koo H.L."/>
            <person name="Kremenetskaia I."/>
            <person name="Kurtz D.B."/>
            <person name="Kwan A."/>
            <person name="Lam B."/>
            <person name="Langin-Hooper S."/>
            <person name="Lee A."/>
            <person name="Lee J.M."/>
            <person name="Lenz C.A."/>
            <person name="Li J.H."/>
            <person name="Li Y.-P."/>
            <person name="Lin X."/>
            <person name="Liu S.X."/>
            <person name="Liu Z.A."/>
            <person name="Luros J.S."/>
            <person name="Maiti R."/>
            <person name="Marziali A."/>
            <person name="Militscher J."/>
            <person name="Miranda M."/>
            <person name="Nguyen M."/>
            <person name="Nierman W.C."/>
            <person name="Osborne B.I."/>
            <person name="Pai G."/>
            <person name="Peterson J."/>
            <person name="Pham P.K."/>
            <person name="Rizzo M."/>
            <person name="Rooney T."/>
            <person name="Rowley D."/>
            <person name="Sakano H."/>
            <person name="Salzberg S.L."/>
            <person name="Schwartz J.R."/>
            <person name="Shinn P."/>
            <person name="Southwick A.M."/>
            <person name="Sun H."/>
            <person name="Tallon L.J."/>
            <person name="Tambunga G."/>
            <person name="Toriumi M.J."/>
            <person name="Town C.D."/>
            <person name="Utterback T."/>
            <person name="Van Aken S."/>
            <person name="Vaysberg M."/>
            <person name="Vysotskaia V.S."/>
            <person name="Walker M."/>
            <person name="Wu D."/>
            <person name="Yu G."/>
            <person name="Fraser C.M."/>
            <person name="Venter J.C."/>
            <person name="Davis R.W."/>
        </authorList>
    </citation>
    <scope>NUCLEOTIDE SEQUENCE [LARGE SCALE GENOMIC DNA]</scope>
    <source>
        <strain>cv. Columbia</strain>
    </source>
</reference>
<reference key="2">
    <citation type="journal article" date="2017" name="Plant J.">
        <title>Araport11: a complete reannotation of the Arabidopsis thaliana reference genome.</title>
        <authorList>
            <person name="Cheng C.Y."/>
            <person name="Krishnakumar V."/>
            <person name="Chan A.P."/>
            <person name="Thibaud-Nissen F."/>
            <person name="Schobel S."/>
            <person name="Town C.D."/>
        </authorList>
    </citation>
    <scope>GENOME REANNOTATION</scope>
    <source>
        <strain>cv. Columbia</strain>
    </source>
</reference>
<reference key="3">
    <citation type="journal article" date="2002" name="Science">
        <title>Functional annotation of a full-length Arabidopsis cDNA collection.</title>
        <authorList>
            <person name="Seki M."/>
            <person name="Narusaka M."/>
            <person name="Kamiya A."/>
            <person name="Ishida J."/>
            <person name="Satou M."/>
            <person name="Sakurai T."/>
            <person name="Nakajima M."/>
            <person name="Enju A."/>
            <person name="Akiyama K."/>
            <person name="Oono Y."/>
            <person name="Muramatsu M."/>
            <person name="Hayashizaki Y."/>
            <person name="Kawai J."/>
            <person name="Carninci P."/>
            <person name="Itoh M."/>
            <person name="Ishii Y."/>
            <person name="Arakawa T."/>
            <person name="Shibata K."/>
            <person name="Shinagawa A."/>
            <person name="Shinozaki K."/>
        </authorList>
    </citation>
    <scope>NUCLEOTIDE SEQUENCE [LARGE SCALE MRNA]</scope>
    <source>
        <strain>cv. Columbia</strain>
    </source>
</reference>
<reference key="4">
    <citation type="journal article" date="2003" name="Science">
        <title>Empirical analysis of transcriptional activity in the Arabidopsis genome.</title>
        <authorList>
            <person name="Yamada K."/>
            <person name="Lim J."/>
            <person name="Dale J.M."/>
            <person name="Chen H."/>
            <person name="Shinn P."/>
            <person name="Palm C.J."/>
            <person name="Southwick A.M."/>
            <person name="Wu H.C."/>
            <person name="Kim C.J."/>
            <person name="Nguyen M."/>
            <person name="Pham P.K."/>
            <person name="Cheuk R.F."/>
            <person name="Karlin-Newmann G."/>
            <person name="Liu S.X."/>
            <person name="Lam B."/>
            <person name="Sakano H."/>
            <person name="Wu T."/>
            <person name="Yu G."/>
            <person name="Miranda M."/>
            <person name="Quach H.L."/>
            <person name="Tripp M."/>
            <person name="Chang C.H."/>
            <person name="Lee J.M."/>
            <person name="Toriumi M.J."/>
            <person name="Chan M.M."/>
            <person name="Tang C.C."/>
            <person name="Onodera C.S."/>
            <person name="Deng J.M."/>
            <person name="Akiyama K."/>
            <person name="Ansari Y."/>
            <person name="Arakawa T."/>
            <person name="Banh J."/>
            <person name="Banno F."/>
            <person name="Bowser L."/>
            <person name="Brooks S.Y."/>
            <person name="Carninci P."/>
            <person name="Chao Q."/>
            <person name="Choy N."/>
            <person name="Enju A."/>
            <person name="Goldsmith A.D."/>
            <person name="Gurjal M."/>
            <person name="Hansen N.F."/>
            <person name="Hayashizaki Y."/>
            <person name="Johnson-Hopson C."/>
            <person name="Hsuan V.W."/>
            <person name="Iida K."/>
            <person name="Karnes M."/>
            <person name="Khan S."/>
            <person name="Koesema E."/>
            <person name="Ishida J."/>
            <person name="Jiang P.X."/>
            <person name="Jones T."/>
            <person name="Kawai J."/>
            <person name="Kamiya A."/>
            <person name="Meyers C."/>
            <person name="Nakajima M."/>
            <person name="Narusaka M."/>
            <person name="Seki M."/>
            <person name="Sakurai T."/>
            <person name="Satou M."/>
            <person name="Tamse R."/>
            <person name="Vaysberg M."/>
            <person name="Wallender E.K."/>
            <person name="Wong C."/>
            <person name="Yamamura Y."/>
            <person name="Yuan S."/>
            <person name="Shinozaki K."/>
            <person name="Davis R.W."/>
            <person name="Theologis A."/>
            <person name="Ecker J.R."/>
        </authorList>
    </citation>
    <scope>NUCLEOTIDE SEQUENCE [LARGE SCALE MRNA]</scope>
    <source>
        <strain>cv. Columbia</strain>
    </source>
</reference>
<reference key="5">
    <citation type="journal article" date="2013" name="New Phytol.">
        <title>Bruno-like proteins modulate flowering time via 3' UTR-dependent decay of SOC1 mRNA.</title>
        <authorList>
            <person name="Kim H.S."/>
            <person name="Abbasi N."/>
            <person name="Choi S.B."/>
        </authorList>
    </citation>
    <scope>FUNCTION</scope>
    <scope>SUBCELLULAR LOCATION</scope>
    <scope>TISSUE SPECIFICITY</scope>
</reference>
<comment type="function">
    <text evidence="3">RNA-binding protein involved in the regulation of flowering time. Acts as a repressor of the activity of SOC1, a transcriptional activator of flowering time. Binds to the 3'-UTR of SOC1 mRNA in the cytoplasm and participates in SOC1 mRNA decay, mediated by the distal region of the SOC1 3'-UTR.</text>
</comment>
<comment type="interaction">
    <interactant intactId="EBI-4425532">
        <id>Q8GZ26</id>
    </interactant>
    <interactant intactId="EBI-346271">
        <id>Q9SHZ6</id>
        <label>UBA1A</label>
    </interactant>
    <organismsDiffer>false</organismsDiffer>
    <experiments>3</experiments>
</comment>
<comment type="subcellular location">
    <subcellularLocation>
        <location evidence="3">Cytoplasm</location>
    </subcellularLocation>
</comment>
<comment type="alternative products">
    <event type="alternative splicing"/>
    <isoform>
        <id>Q8GZ26-1</id>
        <name>1</name>
        <sequence type="displayed"/>
    </isoform>
    <text evidence="5">A number of isoforms are produced. According to EST sequences.</text>
</comment>
<comment type="tissue specificity">
    <text evidence="3">Expressed in roots, stems, flowers and siliques.</text>
</comment>
<comment type="sequence caution" evidence="5">
    <conflict type="erroneous gene model prediction">
        <sequence resource="EMBL-CDS" id="AAF86538"/>
    </conflict>
</comment>
<feature type="chain" id="PRO_0000431961" description="RNA-binding protein BRN2">
    <location>
        <begin position="1"/>
        <end position="429"/>
    </location>
</feature>
<feature type="domain" description="RRM 1" evidence="1">
    <location>
        <begin position="12"/>
        <end position="93"/>
    </location>
</feature>
<feature type="domain" description="RRM 2" evidence="1">
    <location>
        <begin position="100"/>
        <end position="180"/>
    </location>
</feature>
<feature type="domain" description="RRM 3" evidence="1">
    <location>
        <begin position="330"/>
        <end position="408"/>
    </location>
</feature>
<feature type="region of interest" description="Disordered" evidence="2">
    <location>
        <begin position="410"/>
        <end position="429"/>
    </location>
</feature>
<feature type="compositionally biased region" description="Polar residues" evidence="2">
    <location>
        <begin position="418"/>
        <end position="429"/>
    </location>
</feature>
<sequence length="429" mass="47623">MAEETMENEERVKLFVGQVPKHMTEIQLLTLFREFSIVNEVNIIKEKTTRAPRGCCFLTCPTREDADKVINSFHNKKTLPGASSPLQVKYADGELERLEHKLFVGMLPKNVSETEVQSLFSEYGTIKDLQILRGSLQTSKGCLFLKYESKEQAVAAMEALNGRHIMEGANVPLIVKWADTEKERQARRLLKVQSHVSRLDPQNPSMFGALPMSYVPPYNGYGYHVPGTYGYMLPPIQTQHAFHNVISPNQGNGRALQGTALTESVPPRLAPRRNFPTALGNYGYHGLQYPMAFPRGMIPPRLPLTTVSPGISNNGTSIPSSLQTEGPAGANLFIYNIPREFEDQELAATFQPFGKVLSAKVFVDKATGISKCFGFISYDSQAAAQNAINTMNGCQLSGKKLKVQLKRDNGQQQQQQQSKNPLFNGLLNS</sequence>
<organism>
    <name type="scientific">Arabidopsis thaliana</name>
    <name type="common">Mouse-ear cress</name>
    <dbReference type="NCBI Taxonomy" id="3702"/>
    <lineage>
        <taxon>Eukaryota</taxon>
        <taxon>Viridiplantae</taxon>
        <taxon>Streptophyta</taxon>
        <taxon>Embryophyta</taxon>
        <taxon>Tracheophyta</taxon>
        <taxon>Spermatophyta</taxon>
        <taxon>Magnoliopsida</taxon>
        <taxon>eudicotyledons</taxon>
        <taxon>Gunneridae</taxon>
        <taxon>Pentapetalae</taxon>
        <taxon>rosids</taxon>
        <taxon>malvids</taxon>
        <taxon>Brassicales</taxon>
        <taxon>Brassicaceae</taxon>
        <taxon>Camelineae</taxon>
        <taxon>Arabidopsis</taxon>
    </lineage>
</organism>
<name>BRN2L_ARATH</name>
<proteinExistence type="evidence at protein level"/>